<feature type="chain" id="PRO_0000320827" description="Protein translocase subunit SecA">
    <location>
        <begin position="1"/>
        <end position="851"/>
    </location>
</feature>
<feature type="binding site" evidence="1">
    <location>
        <position position="88"/>
    </location>
    <ligand>
        <name>ATP</name>
        <dbReference type="ChEBI" id="CHEBI:30616"/>
    </ligand>
</feature>
<feature type="binding site" evidence="1">
    <location>
        <begin position="106"/>
        <end position="110"/>
    </location>
    <ligand>
        <name>ATP</name>
        <dbReference type="ChEBI" id="CHEBI:30616"/>
    </ligand>
</feature>
<feature type="binding site" evidence="1">
    <location>
        <position position="496"/>
    </location>
    <ligand>
        <name>ATP</name>
        <dbReference type="ChEBI" id="CHEBI:30616"/>
    </ligand>
</feature>
<feature type="binding site" evidence="1">
    <location>
        <position position="828"/>
    </location>
    <ligand>
        <name>Zn(2+)</name>
        <dbReference type="ChEBI" id="CHEBI:29105"/>
    </ligand>
</feature>
<feature type="binding site" evidence="1">
    <location>
        <position position="830"/>
    </location>
    <ligand>
        <name>Zn(2+)</name>
        <dbReference type="ChEBI" id="CHEBI:29105"/>
    </ligand>
</feature>
<feature type="binding site" evidence="1">
    <location>
        <position position="839"/>
    </location>
    <ligand>
        <name>Zn(2+)</name>
        <dbReference type="ChEBI" id="CHEBI:29105"/>
    </ligand>
</feature>
<feature type="binding site" evidence="1">
    <location>
        <position position="840"/>
    </location>
    <ligand>
        <name>Zn(2+)</name>
        <dbReference type="ChEBI" id="CHEBI:29105"/>
    </ligand>
</feature>
<protein>
    <recommendedName>
        <fullName evidence="1">Protein translocase subunit SecA</fullName>
        <ecNumber evidence="1">7.4.2.8</ecNumber>
    </recommendedName>
</protein>
<name>SECA_HELHP</name>
<accession>Q7VJC6</accession>
<sequence length="851" mass="96958">MLQTLISKFLGSRNNKLIKHYLKEVQAINALESTYNTLSDAQLQEAFMQLRKLIQNGETSLQSILHKSFAITREASKRVLGMRHFDVQLIGGMALNDGRIAEMKTGEGKTLVATLAVCLNALCGRGVHVVTVNDYLANRDAKELEPLYNFLGFEVGIITSEVRDDNERLQAYACDIVYGTNNEFGFDYLRDNMKYDLSQKVQGEHYFAIIDEVDSILIDEARTPLIISGPVNRTLEHYQLANSVAQRLKNEEDFSIDEKNRVILLNEEGIKKAESLFKVDNLYSIENAALSHHLDQALKANYLFIKDKDYVVQNDEVVIVDEFTGRLSEGRRFSEGLHQAIEAKEKVDIKEESQTLADITFQNYFRLYEKLSGMTGTAQTEASEFLQIYNLEVVSIPTNVPVQRKDLNDLIYKSEKEKFNAVIDKIQELYKKGQPVLVGTASIEKSEILHELLKKHRIPHTVLNAKQHTKEAEIIKDAGVKGAVTIATNMAGRGVDIKINDEIRELGGLYIIGTERHESRRIDNQLRGRAGRQGDPGISQFYLSLEDSLLRIFGSDKIKGIMERLGLKEGEHIESGLVTRSVESAQKKVENLHFESRKHLLEYDDVANEQRKAVYKLRNELLDENCSLQERISTNRELTAQSMLYKAQILPGDDSSNFNIDSLKAQINEELGLEIGNCENLDYDELLEKLITQMNTAYEEKMSKLEESQRAQIERIIYLQVLDSSWREHLYTMDNLKTGIGLRGYNQKDPLVEYKKESYNLFLEFVENLKFETTKMLQIIQLRDKEEEVANKMIKNLQDELEENLQDLNTNMDSTPVRKNKIARNDPCPCGSGKKYKVCHGKSGPKSGLLA</sequence>
<dbReference type="EC" id="7.4.2.8" evidence="1"/>
<dbReference type="EMBL" id="AE017125">
    <property type="protein sequence ID" value="AAP76914.1"/>
    <property type="status" value="ALT_INIT"/>
    <property type="molecule type" value="Genomic_DNA"/>
</dbReference>
<dbReference type="RefSeq" id="WP_011115160.1">
    <property type="nucleotide sequence ID" value="NC_004917.1"/>
</dbReference>
<dbReference type="SMR" id="Q7VJC6"/>
<dbReference type="STRING" id="235279.HH_0317"/>
<dbReference type="KEGG" id="hhe:HH_0317"/>
<dbReference type="eggNOG" id="COG0653">
    <property type="taxonomic scope" value="Bacteria"/>
</dbReference>
<dbReference type="HOGENOM" id="CLU_005314_3_0_7"/>
<dbReference type="OrthoDB" id="9805579at2"/>
<dbReference type="Proteomes" id="UP000002495">
    <property type="component" value="Chromosome"/>
</dbReference>
<dbReference type="GO" id="GO:0031522">
    <property type="term" value="C:cell envelope Sec protein transport complex"/>
    <property type="evidence" value="ECO:0007669"/>
    <property type="project" value="TreeGrafter"/>
</dbReference>
<dbReference type="GO" id="GO:0005829">
    <property type="term" value="C:cytosol"/>
    <property type="evidence" value="ECO:0007669"/>
    <property type="project" value="TreeGrafter"/>
</dbReference>
<dbReference type="GO" id="GO:0005886">
    <property type="term" value="C:plasma membrane"/>
    <property type="evidence" value="ECO:0007669"/>
    <property type="project" value="UniProtKB-SubCell"/>
</dbReference>
<dbReference type="GO" id="GO:0005524">
    <property type="term" value="F:ATP binding"/>
    <property type="evidence" value="ECO:0007669"/>
    <property type="project" value="UniProtKB-UniRule"/>
</dbReference>
<dbReference type="GO" id="GO:0046872">
    <property type="term" value="F:metal ion binding"/>
    <property type="evidence" value="ECO:0007669"/>
    <property type="project" value="UniProtKB-KW"/>
</dbReference>
<dbReference type="GO" id="GO:0008564">
    <property type="term" value="F:protein-exporting ATPase activity"/>
    <property type="evidence" value="ECO:0007669"/>
    <property type="project" value="UniProtKB-EC"/>
</dbReference>
<dbReference type="GO" id="GO:0065002">
    <property type="term" value="P:intracellular protein transmembrane transport"/>
    <property type="evidence" value="ECO:0007669"/>
    <property type="project" value="UniProtKB-UniRule"/>
</dbReference>
<dbReference type="GO" id="GO:0017038">
    <property type="term" value="P:protein import"/>
    <property type="evidence" value="ECO:0007669"/>
    <property type="project" value="InterPro"/>
</dbReference>
<dbReference type="GO" id="GO:0006605">
    <property type="term" value="P:protein targeting"/>
    <property type="evidence" value="ECO:0007669"/>
    <property type="project" value="UniProtKB-UniRule"/>
</dbReference>
<dbReference type="GO" id="GO:0043952">
    <property type="term" value="P:protein transport by the Sec complex"/>
    <property type="evidence" value="ECO:0007669"/>
    <property type="project" value="TreeGrafter"/>
</dbReference>
<dbReference type="CDD" id="cd17928">
    <property type="entry name" value="DEXDc_SecA"/>
    <property type="match status" value="1"/>
</dbReference>
<dbReference type="CDD" id="cd18803">
    <property type="entry name" value="SF2_C_secA"/>
    <property type="match status" value="1"/>
</dbReference>
<dbReference type="FunFam" id="3.40.50.300:FF:000429">
    <property type="entry name" value="Preprotein translocase subunit SecA"/>
    <property type="match status" value="1"/>
</dbReference>
<dbReference type="FunFam" id="3.90.1440.10:FF:000001">
    <property type="entry name" value="Preprotein translocase subunit SecA"/>
    <property type="match status" value="1"/>
</dbReference>
<dbReference type="Gene3D" id="1.10.3060.10">
    <property type="entry name" value="Helical scaffold and wing domains of SecA"/>
    <property type="match status" value="1"/>
</dbReference>
<dbReference type="Gene3D" id="3.40.50.300">
    <property type="entry name" value="P-loop containing nucleotide triphosphate hydrolases"/>
    <property type="match status" value="3"/>
</dbReference>
<dbReference type="Gene3D" id="3.90.1440.10">
    <property type="entry name" value="SecA, preprotein cross-linking domain"/>
    <property type="match status" value="1"/>
</dbReference>
<dbReference type="HAMAP" id="MF_01382">
    <property type="entry name" value="SecA"/>
    <property type="match status" value="1"/>
</dbReference>
<dbReference type="InterPro" id="IPR014001">
    <property type="entry name" value="Helicase_ATP-bd"/>
</dbReference>
<dbReference type="InterPro" id="IPR001650">
    <property type="entry name" value="Helicase_C-like"/>
</dbReference>
<dbReference type="InterPro" id="IPR027417">
    <property type="entry name" value="P-loop_NTPase"/>
</dbReference>
<dbReference type="InterPro" id="IPR004027">
    <property type="entry name" value="SEC_C_motif"/>
</dbReference>
<dbReference type="InterPro" id="IPR000185">
    <property type="entry name" value="SecA"/>
</dbReference>
<dbReference type="InterPro" id="IPR011115">
    <property type="entry name" value="SecA_DEAD"/>
</dbReference>
<dbReference type="InterPro" id="IPR014018">
    <property type="entry name" value="SecA_motor_DEAD"/>
</dbReference>
<dbReference type="InterPro" id="IPR011130">
    <property type="entry name" value="SecA_preprotein_X-link_dom"/>
</dbReference>
<dbReference type="InterPro" id="IPR044722">
    <property type="entry name" value="SecA_SF2_C"/>
</dbReference>
<dbReference type="InterPro" id="IPR011116">
    <property type="entry name" value="SecA_Wing/Scaffold"/>
</dbReference>
<dbReference type="InterPro" id="IPR036266">
    <property type="entry name" value="SecA_Wing/Scaffold_sf"/>
</dbReference>
<dbReference type="InterPro" id="IPR036670">
    <property type="entry name" value="SecA_X-link_sf"/>
</dbReference>
<dbReference type="NCBIfam" id="NF006630">
    <property type="entry name" value="PRK09200.1"/>
    <property type="match status" value="1"/>
</dbReference>
<dbReference type="NCBIfam" id="NF009538">
    <property type="entry name" value="PRK12904.1"/>
    <property type="match status" value="1"/>
</dbReference>
<dbReference type="NCBIfam" id="TIGR00963">
    <property type="entry name" value="secA"/>
    <property type="match status" value="1"/>
</dbReference>
<dbReference type="PANTHER" id="PTHR30612:SF0">
    <property type="entry name" value="CHLOROPLAST PROTEIN-TRANSPORTING ATPASE"/>
    <property type="match status" value="1"/>
</dbReference>
<dbReference type="PANTHER" id="PTHR30612">
    <property type="entry name" value="SECA INNER MEMBRANE COMPONENT OF SEC PROTEIN SECRETION SYSTEM"/>
    <property type="match status" value="1"/>
</dbReference>
<dbReference type="Pfam" id="PF21090">
    <property type="entry name" value="P-loop_SecA"/>
    <property type="match status" value="1"/>
</dbReference>
<dbReference type="Pfam" id="PF02810">
    <property type="entry name" value="SEC-C"/>
    <property type="match status" value="1"/>
</dbReference>
<dbReference type="Pfam" id="PF07517">
    <property type="entry name" value="SecA_DEAD"/>
    <property type="match status" value="1"/>
</dbReference>
<dbReference type="Pfam" id="PF01043">
    <property type="entry name" value="SecA_PP_bind"/>
    <property type="match status" value="1"/>
</dbReference>
<dbReference type="Pfam" id="PF07516">
    <property type="entry name" value="SecA_SW"/>
    <property type="match status" value="1"/>
</dbReference>
<dbReference type="PRINTS" id="PR00906">
    <property type="entry name" value="SECA"/>
</dbReference>
<dbReference type="SMART" id="SM00490">
    <property type="entry name" value="HELICc"/>
    <property type="match status" value="1"/>
</dbReference>
<dbReference type="SMART" id="SM00957">
    <property type="entry name" value="SecA_DEAD"/>
    <property type="match status" value="1"/>
</dbReference>
<dbReference type="SMART" id="SM00958">
    <property type="entry name" value="SecA_PP_bind"/>
    <property type="match status" value="1"/>
</dbReference>
<dbReference type="SUPFAM" id="SSF81886">
    <property type="entry name" value="Helical scaffold and wing domains of SecA"/>
    <property type="match status" value="1"/>
</dbReference>
<dbReference type="SUPFAM" id="SSF52540">
    <property type="entry name" value="P-loop containing nucleoside triphosphate hydrolases"/>
    <property type="match status" value="2"/>
</dbReference>
<dbReference type="SUPFAM" id="SSF81767">
    <property type="entry name" value="Pre-protein crosslinking domain of SecA"/>
    <property type="match status" value="1"/>
</dbReference>
<dbReference type="PROSITE" id="PS51196">
    <property type="entry name" value="SECA_MOTOR_DEAD"/>
    <property type="match status" value="1"/>
</dbReference>
<gene>
    <name evidence="1" type="primary">secA</name>
    <name type="ordered locus">HH_0317</name>
</gene>
<proteinExistence type="inferred from homology"/>
<evidence type="ECO:0000255" key="1">
    <source>
        <dbReference type="HAMAP-Rule" id="MF_01382"/>
    </source>
</evidence>
<evidence type="ECO:0000305" key="2"/>
<comment type="function">
    <text evidence="1">Part of the Sec protein translocase complex. Interacts with the SecYEG preprotein conducting channel. Has a central role in coupling the hydrolysis of ATP to the transfer of proteins into and across the cell membrane, serving as an ATP-driven molecular motor driving the stepwise translocation of polypeptide chains across the membrane.</text>
</comment>
<comment type="catalytic activity">
    <reaction evidence="1">
        <text>ATP + H2O + cellular proteinSide 1 = ADP + phosphate + cellular proteinSide 2.</text>
        <dbReference type="EC" id="7.4.2.8"/>
    </reaction>
</comment>
<comment type="cofactor">
    <cofactor evidence="1">
        <name>Zn(2+)</name>
        <dbReference type="ChEBI" id="CHEBI:29105"/>
    </cofactor>
    <text evidence="1">May bind 1 zinc ion per subunit.</text>
</comment>
<comment type="subunit">
    <text evidence="1">Monomer and homodimer. Part of the essential Sec protein translocation apparatus which comprises SecA, SecYEG and auxiliary proteins SecDF-YajC and YidC.</text>
</comment>
<comment type="subcellular location">
    <subcellularLocation>
        <location evidence="1">Cell inner membrane</location>
        <topology evidence="1">Peripheral membrane protein</topology>
        <orientation evidence="1">Cytoplasmic side</orientation>
    </subcellularLocation>
    <subcellularLocation>
        <location evidence="1">Cytoplasm</location>
    </subcellularLocation>
    <text evidence="1">Distribution is 50-50.</text>
</comment>
<comment type="similarity">
    <text evidence="1">Belongs to the SecA family.</text>
</comment>
<comment type="sequence caution" evidence="2">
    <conflict type="erroneous initiation">
        <sequence resource="EMBL-CDS" id="AAP76914"/>
    </conflict>
    <text>Truncated N-terminus.</text>
</comment>
<organism>
    <name type="scientific">Helicobacter hepaticus (strain ATCC 51449 / 3B1)</name>
    <dbReference type="NCBI Taxonomy" id="235279"/>
    <lineage>
        <taxon>Bacteria</taxon>
        <taxon>Pseudomonadati</taxon>
        <taxon>Campylobacterota</taxon>
        <taxon>Epsilonproteobacteria</taxon>
        <taxon>Campylobacterales</taxon>
        <taxon>Helicobacteraceae</taxon>
        <taxon>Helicobacter</taxon>
    </lineage>
</organism>
<keyword id="KW-0067">ATP-binding</keyword>
<keyword id="KW-0997">Cell inner membrane</keyword>
<keyword id="KW-1003">Cell membrane</keyword>
<keyword id="KW-0963">Cytoplasm</keyword>
<keyword id="KW-0472">Membrane</keyword>
<keyword id="KW-0479">Metal-binding</keyword>
<keyword id="KW-0547">Nucleotide-binding</keyword>
<keyword id="KW-0653">Protein transport</keyword>
<keyword id="KW-1185">Reference proteome</keyword>
<keyword id="KW-1278">Translocase</keyword>
<keyword id="KW-0811">Translocation</keyword>
<keyword id="KW-0813">Transport</keyword>
<keyword id="KW-0862">Zinc</keyword>
<reference key="1">
    <citation type="journal article" date="2003" name="Proc. Natl. Acad. Sci. U.S.A.">
        <title>The complete genome sequence of the carcinogenic bacterium Helicobacter hepaticus.</title>
        <authorList>
            <person name="Suerbaum S."/>
            <person name="Josenhans C."/>
            <person name="Sterzenbach T."/>
            <person name="Drescher B."/>
            <person name="Brandt P."/>
            <person name="Bell M."/>
            <person name="Droege M."/>
            <person name="Fartmann B."/>
            <person name="Fischer H.-P."/>
            <person name="Ge Z."/>
            <person name="Hoerster A."/>
            <person name="Holland R."/>
            <person name="Klein K."/>
            <person name="Koenig J."/>
            <person name="Macko L."/>
            <person name="Mendz G.L."/>
            <person name="Nyakatura G."/>
            <person name="Schauer D.B."/>
            <person name="Shen Z."/>
            <person name="Weber J."/>
            <person name="Frosch M."/>
            <person name="Fox J.G."/>
        </authorList>
    </citation>
    <scope>NUCLEOTIDE SEQUENCE [LARGE SCALE GENOMIC DNA]</scope>
    <source>
        <strain>ATCC 51449 / 3B1</strain>
    </source>
</reference>